<comment type="function">
    <text evidence="1">Involved in the biosynthesis of isoprenoids. Catalyzes the 1,3-allylic rearrangement of the homoallylic substrate isopentenyl (IPP) to its allylic isomer, dimethylallyl diphosphate (DMAPP).</text>
</comment>
<comment type="catalytic activity">
    <reaction evidence="1">
        <text>isopentenyl diphosphate = dimethylallyl diphosphate</text>
        <dbReference type="Rhea" id="RHEA:23284"/>
        <dbReference type="ChEBI" id="CHEBI:57623"/>
        <dbReference type="ChEBI" id="CHEBI:128769"/>
        <dbReference type="EC" id="5.3.3.2"/>
    </reaction>
</comment>
<comment type="cofactor">
    <cofactor evidence="1">
        <name>FMN</name>
        <dbReference type="ChEBI" id="CHEBI:58210"/>
    </cofactor>
</comment>
<comment type="cofactor">
    <cofactor evidence="1">
        <name>NADPH</name>
        <dbReference type="ChEBI" id="CHEBI:57783"/>
    </cofactor>
</comment>
<comment type="cofactor">
    <cofactor evidence="1">
        <name>Mg(2+)</name>
        <dbReference type="ChEBI" id="CHEBI:18420"/>
    </cofactor>
</comment>
<comment type="subunit">
    <text evidence="1">Homooctamer. Dimer of tetramers.</text>
</comment>
<comment type="subcellular location">
    <subcellularLocation>
        <location evidence="1">Cytoplasm</location>
    </subcellularLocation>
</comment>
<comment type="similarity">
    <text evidence="1">Belongs to the IPP isomerase type 2 family.</text>
</comment>
<name>IDI2_HYDCU</name>
<sequence>MSDSPITQRKQDHIDWLLQDEKIERQQAGFDQIQLTHRGLPECDYAQVDSGTTFLQHSLSFPLLISSMTGGASNALNTINENLARAAEHCQVAMAVGSQRTMILDRKAEKSFQLRQFAPTVPLIANMGAIQLNYGFGYDEAQRMVEVLEADALYLHLNPLQEVIQPEGDTNFAKLAEKIAHLKNHLSVPIILKEVGCGLSEKDIQLGLDAGIEWFDLAGRGGTSWSRIEAHRTEDSQQAELGKMFQDWGLTTPQALKQARPFQSQAQFIASGGIRNGIDMVKSVIMGAQICGVAAPLLKPAMASTNATIGTIEQLQQEFRTAQFLLGMPKMADLFLNDSLIVP</sequence>
<protein>
    <recommendedName>
        <fullName evidence="1">Isopentenyl-diphosphate delta-isomerase</fullName>
        <shortName evidence="1">IPP isomerase</shortName>
        <ecNumber evidence="1">5.3.3.2</ecNumber>
    </recommendedName>
    <alternativeName>
        <fullName evidence="1">Isopentenyl diphosphate:dimethylallyl diphosphate isomerase</fullName>
    </alternativeName>
    <alternativeName>
        <fullName evidence="1">Isopentenyl pyrophosphate isomerase</fullName>
    </alternativeName>
    <alternativeName>
        <fullName evidence="1">Type 2 isopentenyl diphosphate isomerase</fullName>
        <shortName evidence="1">IDI-2</shortName>
    </alternativeName>
</protein>
<reference key="1">
    <citation type="journal article" date="2006" name="PLoS Biol.">
        <title>The genome of deep-sea vent chemolithoautotroph Thiomicrospira crunogena XCL-2.</title>
        <authorList>
            <person name="Scott K.M."/>
            <person name="Sievert S.M."/>
            <person name="Abril F.N."/>
            <person name="Ball L.A."/>
            <person name="Barrett C.J."/>
            <person name="Blake R.A."/>
            <person name="Boller A.J."/>
            <person name="Chain P.S.G."/>
            <person name="Clark J.A."/>
            <person name="Davis C.R."/>
            <person name="Detter C."/>
            <person name="Do K.F."/>
            <person name="Dobrinski K.P."/>
            <person name="Faza B.I."/>
            <person name="Fitzpatrick K.A."/>
            <person name="Freyermuth S.K."/>
            <person name="Harmer T.L."/>
            <person name="Hauser L.J."/>
            <person name="Huegler M."/>
            <person name="Kerfeld C.A."/>
            <person name="Klotz M.G."/>
            <person name="Kong W.W."/>
            <person name="Land M."/>
            <person name="Lapidus A."/>
            <person name="Larimer F.W."/>
            <person name="Longo D.L."/>
            <person name="Lucas S."/>
            <person name="Malfatti S.A."/>
            <person name="Massey S.E."/>
            <person name="Martin D.D."/>
            <person name="McCuddin Z."/>
            <person name="Meyer F."/>
            <person name="Moore J.L."/>
            <person name="Ocampo L.H. Jr."/>
            <person name="Paul J.H."/>
            <person name="Paulsen I.T."/>
            <person name="Reep D.K."/>
            <person name="Ren Q."/>
            <person name="Ross R.L."/>
            <person name="Sato P.Y."/>
            <person name="Thomas P."/>
            <person name="Tinkham L.E."/>
            <person name="Zeruth G.T."/>
        </authorList>
    </citation>
    <scope>NUCLEOTIDE SEQUENCE [LARGE SCALE GENOMIC DNA]</scope>
    <source>
        <strain>DSM 25203 / XCL-2</strain>
    </source>
</reference>
<proteinExistence type="inferred from homology"/>
<accession>Q31EW3</accession>
<dbReference type="EC" id="5.3.3.2" evidence="1"/>
<dbReference type="EMBL" id="CP000109">
    <property type="protein sequence ID" value="ABB42310.1"/>
    <property type="molecule type" value="Genomic_DNA"/>
</dbReference>
<dbReference type="SMR" id="Q31EW3"/>
<dbReference type="STRING" id="317025.Tcr_1718"/>
<dbReference type="KEGG" id="tcx:Tcr_1718"/>
<dbReference type="eggNOG" id="COG1304">
    <property type="taxonomic scope" value="Bacteria"/>
</dbReference>
<dbReference type="HOGENOM" id="CLU_065515_1_0_6"/>
<dbReference type="OrthoDB" id="9795032at2"/>
<dbReference type="GO" id="GO:0005737">
    <property type="term" value="C:cytoplasm"/>
    <property type="evidence" value="ECO:0007669"/>
    <property type="project" value="UniProtKB-SubCell"/>
</dbReference>
<dbReference type="GO" id="GO:0010181">
    <property type="term" value="F:FMN binding"/>
    <property type="evidence" value="ECO:0007669"/>
    <property type="project" value="UniProtKB-UniRule"/>
</dbReference>
<dbReference type="GO" id="GO:0004452">
    <property type="term" value="F:isopentenyl-diphosphate delta-isomerase activity"/>
    <property type="evidence" value="ECO:0007669"/>
    <property type="project" value="UniProtKB-UniRule"/>
</dbReference>
<dbReference type="GO" id="GO:0000287">
    <property type="term" value="F:magnesium ion binding"/>
    <property type="evidence" value="ECO:0007669"/>
    <property type="project" value="UniProtKB-UniRule"/>
</dbReference>
<dbReference type="GO" id="GO:0070402">
    <property type="term" value="F:NADPH binding"/>
    <property type="evidence" value="ECO:0007669"/>
    <property type="project" value="UniProtKB-UniRule"/>
</dbReference>
<dbReference type="GO" id="GO:0016491">
    <property type="term" value="F:oxidoreductase activity"/>
    <property type="evidence" value="ECO:0007669"/>
    <property type="project" value="InterPro"/>
</dbReference>
<dbReference type="GO" id="GO:0008299">
    <property type="term" value="P:isoprenoid biosynthetic process"/>
    <property type="evidence" value="ECO:0007669"/>
    <property type="project" value="UniProtKB-UniRule"/>
</dbReference>
<dbReference type="CDD" id="cd02811">
    <property type="entry name" value="IDI-2_FMN"/>
    <property type="match status" value="1"/>
</dbReference>
<dbReference type="Gene3D" id="3.20.20.70">
    <property type="entry name" value="Aldolase class I"/>
    <property type="match status" value="1"/>
</dbReference>
<dbReference type="HAMAP" id="MF_00354">
    <property type="entry name" value="Idi_2"/>
    <property type="match status" value="1"/>
</dbReference>
<dbReference type="InterPro" id="IPR013785">
    <property type="entry name" value="Aldolase_TIM"/>
</dbReference>
<dbReference type="InterPro" id="IPR000262">
    <property type="entry name" value="FMN-dep_DH"/>
</dbReference>
<dbReference type="InterPro" id="IPR011179">
    <property type="entry name" value="IPdP_isomerase"/>
</dbReference>
<dbReference type="NCBIfam" id="TIGR02151">
    <property type="entry name" value="IPP_isom_2"/>
    <property type="match status" value="1"/>
</dbReference>
<dbReference type="PANTHER" id="PTHR43665">
    <property type="entry name" value="ISOPENTENYL-DIPHOSPHATE DELTA-ISOMERASE"/>
    <property type="match status" value="1"/>
</dbReference>
<dbReference type="PANTHER" id="PTHR43665:SF1">
    <property type="entry name" value="ISOPENTENYL-DIPHOSPHATE DELTA-ISOMERASE"/>
    <property type="match status" value="1"/>
</dbReference>
<dbReference type="Pfam" id="PF01070">
    <property type="entry name" value="FMN_dh"/>
    <property type="match status" value="2"/>
</dbReference>
<dbReference type="PIRSF" id="PIRSF003314">
    <property type="entry name" value="IPP_isomerase"/>
    <property type="match status" value="1"/>
</dbReference>
<dbReference type="SUPFAM" id="SSF51395">
    <property type="entry name" value="FMN-linked oxidoreductases"/>
    <property type="match status" value="1"/>
</dbReference>
<evidence type="ECO:0000255" key="1">
    <source>
        <dbReference type="HAMAP-Rule" id="MF_00354"/>
    </source>
</evidence>
<organism>
    <name type="scientific">Hydrogenovibrio crunogenus (strain DSM 25203 / XCL-2)</name>
    <name type="common">Thiomicrospira crunogena</name>
    <dbReference type="NCBI Taxonomy" id="317025"/>
    <lineage>
        <taxon>Bacteria</taxon>
        <taxon>Pseudomonadati</taxon>
        <taxon>Pseudomonadota</taxon>
        <taxon>Gammaproteobacteria</taxon>
        <taxon>Thiotrichales</taxon>
        <taxon>Piscirickettsiaceae</taxon>
        <taxon>Hydrogenovibrio</taxon>
    </lineage>
</organism>
<feature type="chain" id="PRO_0000229516" description="Isopentenyl-diphosphate delta-isomerase">
    <location>
        <begin position="1"/>
        <end position="343"/>
    </location>
</feature>
<feature type="binding site" evidence="1">
    <location>
        <begin position="9"/>
        <end position="10"/>
    </location>
    <ligand>
        <name>substrate</name>
    </ligand>
</feature>
<feature type="binding site" evidence="1">
    <location>
        <position position="66"/>
    </location>
    <ligand>
        <name>FMN</name>
        <dbReference type="ChEBI" id="CHEBI:58210"/>
    </ligand>
</feature>
<feature type="binding site" evidence="1">
    <location>
        <begin position="67"/>
        <end position="69"/>
    </location>
    <ligand>
        <name>FMN</name>
        <dbReference type="ChEBI" id="CHEBI:58210"/>
    </ligand>
</feature>
<feature type="binding site" evidence="1">
    <location>
        <begin position="98"/>
        <end position="100"/>
    </location>
    <ligand>
        <name>substrate</name>
    </ligand>
</feature>
<feature type="binding site" evidence="1">
    <location>
        <position position="98"/>
    </location>
    <ligand>
        <name>FMN</name>
        <dbReference type="ChEBI" id="CHEBI:58210"/>
    </ligand>
</feature>
<feature type="binding site" evidence="1">
    <location>
        <position position="126"/>
    </location>
    <ligand>
        <name>FMN</name>
        <dbReference type="ChEBI" id="CHEBI:58210"/>
    </ligand>
</feature>
<feature type="binding site" evidence="1">
    <location>
        <position position="161"/>
    </location>
    <ligand>
        <name>substrate</name>
    </ligand>
</feature>
<feature type="binding site" evidence="1">
    <location>
        <position position="162"/>
    </location>
    <ligand>
        <name>Mg(2+)</name>
        <dbReference type="ChEBI" id="CHEBI:18420"/>
    </ligand>
</feature>
<feature type="binding site" evidence="1">
    <location>
        <position position="193"/>
    </location>
    <ligand>
        <name>FMN</name>
        <dbReference type="ChEBI" id="CHEBI:58210"/>
    </ligand>
</feature>
<feature type="binding site" evidence="1">
    <location>
        <position position="223"/>
    </location>
    <ligand>
        <name>FMN</name>
        <dbReference type="ChEBI" id="CHEBI:58210"/>
    </ligand>
</feature>
<feature type="binding site" evidence="1">
    <location>
        <begin position="273"/>
        <end position="275"/>
    </location>
    <ligand>
        <name>FMN</name>
        <dbReference type="ChEBI" id="CHEBI:58210"/>
    </ligand>
</feature>
<feature type="binding site" evidence="1">
    <location>
        <begin position="294"/>
        <end position="295"/>
    </location>
    <ligand>
        <name>FMN</name>
        <dbReference type="ChEBI" id="CHEBI:58210"/>
    </ligand>
</feature>
<gene>
    <name evidence="1" type="primary">fni</name>
    <name type="ordered locus">Tcr_1718</name>
</gene>
<keyword id="KW-0963">Cytoplasm</keyword>
<keyword id="KW-0285">Flavoprotein</keyword>
<keyword id="KW-0288">FMN</keyword>
<keyword id="KW-0413">Isomerase</keyword>
<keyword id="KW-0414">Isoprene biosynthesis</keyword>
<keyword id="KW-0460">Magnesium</keyword>
<keyword id="KW-0479">Metal-binding</keyword>
<keyword id="KW-0521">NADP</keyword>